<reference key="1">
    <citation type="journal article" date="2004" name="Proc. Natl. Acad. Sci. U.S.A.">
        <title>Structural flexibility in the Burkholderia mallei genome.</title>
        <authorList>
            <person name="Nierman W.C."/>
            <person name="DeShazer D."/>
            <person name="Kim H.S."/>
            <person name="Tettelin H."/>
            <person name="Nelson K.E."/>
            <person name="Feldblyum T.V."/>
            <person name="Ulrich R.L."/>
            <person name="Ronning C.M."/>
            <person name="Brinkac L.M."/>
            <person name="Daugherty S.C."/>
            <person name="Davidsen T.D."/>
            <person name="DeBoy R.T."/>
            <person name="Dimitrov G."/>
            <person name="Dodson R.J."/>
            <person name="Durkin A.S."/>
            <person name="Gwinn M.L."/>
            <person name="Haft D.H."/>
            <person name="Khouri H.M."/>
            <person name="Kolonay J.F."/>
            <person name="Madupu R."/>
            <person name="Mohammoud Y."/>
            <person name="Nelson W.C."/>
            <person name="Radune D."/>
            <person name="Romero C.M."/>
            <person name="Sarria S."/>
            <person name="Selengut J."/>
            <person name="Shamblin C."/>
            <person name="Sullivan S.A."/>
            <person name="White O."/>
            <person name="Yu Y."/>
            <person name="Zafar N."/>
            <person name="Zhou L."/>
            <person name="Fraser C.M."/>
        </authorList>
    </citation>
    <scope>NUCLEOTIDE SEQUENCE [LARGE SCALE GENOMIC DNA]</scope>
    <source>
        <strain>ATCC 23344</strain>
    </source>
</reference>
<proteinExistence type="inferred from homology"/>
<evidence type="ECO:0000255" key="1">
    <source>
        <dbReference type="HAMAP-Rule" id="MF_02129"/>
    </source>
</evidence>
<evidence type="ECO:0000305" key="2"/>
<evidence type="ECO:0000312" key="3">
    <source>
        <dbReference type="EMBL" id="AAU46625.1"/>
    </source>
</evidence>
<sequence>MAVITKIDTFAAIGAGVIGSGWVARALANGLDVLAWDPAEDAEMQLRANVENAWPALERAGLAPGASPARLHFVPTIEACVADADFVQESAPEREALKLELHERISRAAKPDAIIASSTSGLLPTDFYARAHRPERCIVGHPFNPVYLLPLVEVLGGERTAPDTVDAALGIYRALGMRPLRVRKEVPGFIADRLLEALWREALHLVDEGVATTGEIDDAIRFGAGIRWSFMGTFLTYTLAGGEAGMRHFMQQFGPALELPWTKLVAPKLTDALIDRVVEGTAEQQGPRSIKALERYRDECITEVIAAIAAVKARHGMRYED</sequence>
<gene>
    <name evidence="3" type="ordered locus">BMAA0492</name>
</gene>
<name>LCDH_BURMA</name>
<feature type="chain" id="PRO_0000417897" description="L-carnitine dehydrogenase">
    <location>
        <begin position="1"/>
        <end position="321"/>
    </location>
</feature>
<feature type="binding site" evidence="1">
    <location>
        <begin position="14"/>
        <end position="19"/>
    </location>
    <ligand>
        <name>NAD(+)</name>
        <dbReference type="ChEBI" id="CHEBI:57540"/>
    </ligand>
</feature>
<comment type="function">
    <text evidence="1">Catalyzes the NAD(+)-dependent oxidation of L-carnitine to 3-dehydrocarnitine.</text>
</comment>
<comment type="catalytic activity">
    <reaction evidence="1">
        <text>carnitine + NAD(+) = 3-dehydrocarnitine + NADH + H(+)</text>
        <dbReference type="Rhea" id="RHEA:19265"/>
        <dbReference type="ChEBI" id="CHEBI:15378"/>
        <dbReference type="ChEBI" id="CHEBI:17126"/>
        <dbReference type="ChEBI" id="CHEBI:57540"/>
        <dbReference type="ChEBI" id="CHEBI:57885"/>
        <dbReference type="ChEBI" id="CHEBI:57945"/>
        <dbReference type="EC" id="1.1.1.108"/>
    </reaction>
</comment>
<comment type="pathway">
    <text evidence="1">Amine and polyamine metabolism; carnitine metabolism.</text>
</comment>
<comment type="subunit">
    <text evidence="1">Homodimer.</text>
</comment>
<comment type="subcellular location">
    <subcellularLocation>
        <location evidence="1">Cytoplasm</location>
    </subcellularLocation>
</comment>
<comment type="similarity">
    <text evidence="1">Belongs to the 3-hydroxyacyl-CoA dehydrogenase family. L-carnitine dehydrogenase subfamily.</text>
</comment>
<comment type="sequence caution" evidence="2">
    <conflict type="erroneous initiation">
        <sequence resource="EMBL-CDS" id="AAU46625"/>
    </conflict>
    <text>Extended N-terminus.</text>
</comment>
<protein>
    <recommendedName>
        <fullName evidence="1">L-carnitine dehydrogenase</fullName>
        <shortName evidence="1">CDH</shortName>
        <shortName evidence="1">L-CDH</shortName>
        <ecNumber evidence="1">1.1.1.108</ecNumber>
    </recommendedName>
</protein>
<keyword id="KW-0963">Cytoplasm</keyword>
<keyword id="KW-0520">NAD</keyword>
<keyword id="KW-0560">Oxidoreductase</keyword>
<keyword id="KW-1185">Reference proteome</keyword>
<dbReference type="EC" id="1.1.1.108" evidence="1"/>
<dbReference type="EMBL" id="CP000011">
    <property type="protein sequence ID" value="AAU46625.1"/>
    <property type="status" value="ALT_INIT"/>
    <property type="molecule type" value="Genomic_DNA"/>
</dbReference>
<dbReference type="RefSeq" id="WP_024900416.1">
    <property type="nucleotide sequence ID" value="NC_006349.2"/>
</dbReference>
<dbReference type="RefSeq" id="YP_105264.1">
    <property type="nucleotide sequence ID" value="NC_006349.2"/>
</dbReference>
<dbReference type="SMR" id="Q62DG4"/>
<dbReference type="KEGG" id="bma:BMAA0492"/>
<dbReference type="PATRIC" id="fig|243160.12.peg.3998"/>
<dbReference type="eggNOG" id="COG1250">
    <property type="taxonomic scope" value="Bacteria"/>
</dbReference>
<dbReference type="HOGENOM" id="CLU_009834_0_1_4"/>
<dbReference type="UniPathway" id="UPA00117"/>
<dbReference type="Proteomes" id="UP000006693">
    <property type="component" value="Chromosome 2"/>
</dbReference>
<dbReference type="GO" id="GO:0005737">
    <property type="term" value="C:cytoplasm"/>
    <property type="evidence" value="ECO:0007669"/>
    <property type="project" value="UniProtKB-SubCell"/>
</dbReference>
<dbReference type="GO" id="GO:0047728">
    <property type="term" value="F:carnitine 3-dehydrogenase activity"/>
    <property type="evidence" value="ECO:0007669"/>
    <property type="project" value="UniProtKB-UniRule"/>
</dbReference>
<dbReference type="GO" id="GO:0070403">
    <property type="term" value="F:NAD+ binding"/>
    <property type="evidence" value="ECO:0007669"/>
    <property type="project" value="InterPro"/>
</dbReference>
<dbReference type="GO" id="GO:0009437">
    <property type="term" value="P:carnitine metabolic process"/>
    <property type="evidence" value="ECO:0007669"/>
    <property type="project" value="UniProtKB-UniRule"/>
</dbReference>
<dbReference type="GO" id="GO:0009056">
    <property type="term" value="P:catabolic process"/>
    <property type="evidence" value="ECO:0007669"/>
    <property type="project" value="UniProtKB-ARBA"/>
</dbReference>
<dbReference type="GO" id="GO:0006631">
    <property type="term" value="P:fatty acid metabolic process"/>
    <property type="evidence" value="ECO:0007669"/>
    <property type="project" value="InterPro"/>
</dbReference>
<dbReference type="Gene3D" id="1.10.1040.10">
    <property type="entry name" value="N-(1-d-carboxylethyl)-l-norvaline Dehydrogenase, domain 2"/>
    <property type="match status" value="1"/>
</dbReference>
<dbReference type="Gene3D" id="3.40.50.720">
    <property type="entry name" value="NAD(P)-binding Rossmann-like Domain"/>
    <property type="match status" value="1"/>
</dbReference>
<dbReference type="HAMAP" id="MF_02129">
    <property type="entry name" value="L_carnitine_dehydrog"/>
    <property type="match status" value="1"/>
</dbReference>
<dbReference type="InterPro" id="IPR006176">
    <property type="entry name" value="3-OHacyl-CoA_DH_NAD-bd"/>
</dbReference>
<dbReference type="InterPro" id="IPR006108">
    <property type="entry name" value="3HC_DH_C"/>
</dbReference>
<dbReference type="InterPro" id="IPR008927">
    <property type="entry name" value="6-PGluconate_DH-like_C_sf"/>
</dbReference>
<dbReference type="InterPro" id="IPR013328">
    <property type="entry name" value="6PGD_dom2"/>
</dbReference>
<dbReference type="InterPro" id="IPR026578">
    <property type="entry name" value="L-carnitine_dehydrogenase"/>
</dbReference>
<dbReference type="InterPro" id="IPR036291">
    <property type="entry name" value="NAD(P)-bd_dom_sf"/>
</dbReference>
<dbReference type="NCBIfam" id="NF005471">
    <property type="entry name" value="PRK07066.1"/>
    <property type="match status" value="1"/>
</dbReference>
<dbReference type="PANTHER" id="PTHR48075">
    <property type="entry name" value="3-HYDROXYACYL-COA DEHYDROGENASE FAMILY PROTEIN"/>
    <property type="match status" value="1"/>
</dbReference>
<dbReference type="PANTHER" id="PTHR48075:SF5">
    <property type="entry name" value="3-HYDROXYBUTYRYL-COA DEHYDROGENASE"/>
    <property type="match status" value="1"/>
</dbReference>
<dbReference type="Pfam" id="PF00725">
    <property type="entry name" value="3HCDH"/>
    <property type="match status" value="1"/>
</dbReference>
<dbReference type="Pfam" id="PF02737">
    <property type="entry name" value="3HCDH_N"/>
    <property type="match status" value="1"/>
</dbReference>
<dbReference type="SUPFAM" id="SSF48179">
    <property type="entry name" value="6-phosphogluconate dehydrogenase C-terminal domain-like"/>
    <property type="match status" value="1"/>
</dbReference>
<dbReference type="SUPFAM" id="SSF51735">
    <property type="entry name" value="NAD(P)-binding Rossmann-fold domains"/>
    <property type="match status" value="1"/>
</dbReference>
<accession>Q62DG4</accession>
<organism>
    <name type="scientific">Burkholderia mallei (strain ATCC 23344)</name>
    <dbReference type="NCBI Taxonomy" id="243160"/>
    <lineage>
        <taxon>Bacteria</taxon>
        <taxon>Pseudomonadati</taxon>
        <taxon>Pseudomonadota</taxon>
        <taxon>Betaproteobacteria</taxon>
        <taxon>Burkholderiales</taxon>
        <taxon>Burkholderiaceae</taxon>
        <taxon>Burkholderia</taxon>
        <taxon>pseudomallei group</taxon>
    </lineage>
</organism>